<proteinExistence type="inferred from homology"/>
<dbReference type="EMBL" id="CH408158">
    <property type="protein sequence ID" value="EDK39733.2"/>
    <property type="molecule type" value="Genomic_DNA"/>
</dbReference>
<dbReference type="RefSeq" id="XP_001484450.1">
    <property type="nucleotide sequence ID" value="XM_001484400.1"/>
</dbReference>
<dbReference type="SMR" id="A5DKN0"/>
<dbReference type="FunCoup" id="A5DKN0">
    <property type="interactions" value="235"/>
</dbReference>
<dbReference type="STRING" id="294746.A5DKN0"/>
<dbReference type="GeneID" id="5126282"/>
<dbReference type="KEGG" id="pgu:PGUG_03831"/>
<dbReference type="VEuPathDB" id="FungiDB:PGUG_03831"/>
<dbReference type="eggNOG" id="KOG2149">
    <property type="taxonomic scope" value="Eukaryota"/>
</dbReference>
<dbReference type="HOGENOM" id="CLU_050252_2_0_1"/>
<dbReference type="InParanoid" id="A5DKN0"/>
<dbReference type="OMA" id="CAGGWVK"/>
<dbReference type="OrthoDB" id="361362at2759"/>
<dbReference type="Proteomes" id="UP000001997">
    <property type="component" value="Unassembled WGS sequence"/>
</dbReference>
<dbReference type="GO" id="GO:0005829">
    <property type="term" value="C:cytosol"/>
    <property type="evidence" value="ECO:0007669"/>
    <property type="project" value="EnsemblFungi"/>
</dbReference>
<dbReference type="GO" id="GO:0005654">
    <property type="term" value="C:nucleoplasm"/>
    <property type="evidence" value="ECO:0007669"/>
    <property type="project" value="EnsemblFungi"/>
</dbReference>
<dbReference type="GO" id="GO:0120330">
    <property type="term" value="C:rixosome complex"/>
    <property type="evidence" value="ECO:0007669"/>
    <property type="project" value="EnsemblFungi"/>
</dbReference>
<dbReference type="GO" id="GO:0003682">
    <property type="term" value="F:chromatin binding"/>
    <property type="evidence" value="ECO:0007669"/>
    <property type="project" value="EnsemblFungi"/>
</dbReference>
<dbReference type="GO" id="GO:0000463">
    <property type="term" value="P:maturation of LSU-rRNA from tricistronic rRNA transcript (SSU-rRNA, 5.8S rRNA, LSU-rRNA)"/>
    <property type="evidence" value="ECO:0007669"/>
    <property type="project" value="EnsemblFungi"/>
</dbReference>
<dbReference type="GO" id="GO:0006267">
    <property type="term" value="P:pre-replicative complex assembly involved in nuclear cell cycle DNA replication"/>
    <property type="evidence" value="ECO:0007669"/>
    <property type="project" value="EnsemblFungi"/>
</dbReference>
<dbReference type="GO" id="GO:0030174">
    <property type="term" value="P:regulation of DNA-templated DNA replication initiation"/>
    <property type="evidence" value="ECO:0007669"/>
    <property type="project" value="EnsemblFungi"/>
</dbReference>
<dbReference type="GO" id="GO:0000027">
    <property type="term" value="P:ribosomal large subunit assembly"/>
    <property type="evidence" value="ECO:0007669"/>
    <property type="project" value="EnsemblFungi"/>
</dbReference>
<dbReference type="Gene3D" id="1.25.10.10">
    <property type="entry name" value="Leucine-rich Repeat Variant"/>
    <property type="match status" value="1"/>
</dbReference>
<dbReference type="InterPro" id="IPR011989">
    <property type="entry name" value="ARM-like"/>
</dbReference>
<dbReference type="InterPro" id="IPR016024">
    <property type="entry name" value="ARM-type_fold"/>
</dbReference>
<dbReference type="InterPro" id="IPR024679">
    <property type="entry name" value="Ipi1_N"/>
</dbReference>
<dbReference type="PANTHER" id="PTHR16056">
    <property type="entry name" value="REGULATOR OF MICROTUBULE DYNAMICS PROTEIN"/>
    <property type="match status" value="1"/>
</dbReference>
<dbReference type="PANTHER" id="PTHR16056:SF2">
    <property type="entry name" value="TESTIS-EXPRESSED PROTEIN 10"/>
    <property type="match status" value="1"/>
</dbReference>
<dbReference type="Pfam" id="PF12333">
    <property type="entry name" value="Ipi1_N"/>
    <property type="match status" value="1"/>
</dbReference>
<dbReference type="SUPFAM" id="SSF48371">
    <property type="entry name" value="ARM repeat"/>
    <property type="match status" value="1"/>
</dbReference>
<name>IPI1_PICGU</name>
<evidence type="ECO:0000250" key="1">
    <source>
        <dbReference type="UniProtKB" id="P38803"/>
    </source>
</evidence>
<evidence type="ECO:0000256" key="2">
    <source>
        <dbReference type="SAM" id="MobiDB-lite"/>
    </source>
</evidence>
<evidence type="ECO:0000305" key="3"/>
<protein>
    <recommendedName>
        <fullName>Pre-rRNA-processing protein IPI1</fullName>
    </recommendedName>
</protein>
<keyword id="KW-0539">Nucleus</keyword>
<keyword id="KW-1185">Reference proteome</keyword>
<keyword id="KW-0690">Ribosome biogenesis</keyword>
<keyword id="KW-0698">rRNA processing</keyword>
<accession>A5DKN0</accession>
<feature type="chain" id="PRO_0000308726" description="Pre-rRNA-processing protein IPI1">
    <location>
        <begin position="1"/>
        <end position="336"/>
    </location>
</feature>
<feature type="region of interest" description="Disordered" evidence="2">
    <location>
        <begin position="1"/>
        <end position="36"/>
    </location>
</feature>
<reference key="1">
    <citation type="journal article" date="2009" name="Nature">
        <title>Evolution of pathogenicity and sexual reproduction in eight Candida genomes.</title>
        <authorList>
            <person name="Butler G."/>
            <person name="Rasmussen M.D."/>
            <person name="Lin M.F."/>
            <person name="Santos M.A.S."/>
            <person name="Sakthikumar S."/>
            <person name="Munro C.A."/>
            <person name="Rheinbay E."/>
            <person name="Grabherr M."/>
            <person name="Forche A."/>
            <person name="Reedy J.L."/>
            <person name="Agrafioti I."/>
            <person name="Arnaud M.B."/>
            <person name="Bates S."/>
            <person name="Brown A.J.P."/>
            <person name="Brunke S."/>
            <person name="Costanzo M.C."/>
            <person name="Fitzpatrick D.A."/>
            <person name="de Groot P.W.J."/>
            <person name="Harris D."/>
            <person name="Hoyer L.L."/>
            <person name="Hube B."/>
            <person name="Klis F.M."/>
            <person name="Kodira C."/>
            <person name="Lennard N."/>
            <person name="Logue M.E."/>
            <person name="Martin R."/>
            <person name="Neiman A.M."/>
            <person name="Nikolaou E."/>
            <person name="Quail M.A."/>
            <person name="Quinn J."/>
            <person name="Santos M.C."/>
            <person name="Schmitzberger F.F."/>
            <person name="Sherlock G."/>
            <person name="Shah P."/>
            <person name="Silverstein K.A.T."/>
            <person name="Skrzypek M.S."/>
            <person name="Soll D."/>
            <person name="Staggs R."/>
            <person name="Stansfield I."/>
            <person name="Stumpf M.P.H."/>
            <person name="Sudbery P.E."/>
            <person name="Srikantha T."/>
            <person name="Zeng Q."/>
            <person name="Berman J."/>
            <person name="Berriman M."/>
            <person name="Heitman J."/>
            <person name="Gow N.A.R."/>
            <person name="Lorenz M.C."/>
            <person name="Birren B.W."/>
            <person name="Kellis M."/>
            <person name="Cuomo C.A."/>
        </authorList>
    </citation>
    <scope>NUCLEOTIDE SEQUENCE [LARGE SCALE GENOMIC DNA]</scope>
    <source>
        <strain>ATCC 6260 / CBS 566 / DSM 6381 / JCM 1539 / NBRC 10279 / NRRL Y-324</strain>
    </source>
</reference>
<gene>
    <name type="primary">IPI1</name>
    <name type="ORF">PGUG_03831</name>
</gene>
<organism>
    <name type="scientific">Meyerozyma guilliermondii (strain ATCC 6260 / CBS 566 / DSM 6381 / JCM 1539 / NBRC 10279 / NRRL Y-324)</name>
    <name type="common">Yeast</name>
    <name type="synonym">Candida guilliermondii</name>
    <dbReference type="NCBI Taxonomy" id="294746"/>
    <lineage>
        <taxon>Eukaryota</taxon>
        <taxon>Fungi</taxon>
        <taxon>Dikarya</taxon>
        <taxon>Ascomycota</taxon>
        <taxon>Saccharomycotina</taxon>
        <taxon>Pichiomycetes</taxon>
        <taxon>Debaryomycetaceae</taxon>
        <taxon>Meyerozyma</taxon>
    </lineage>
</organism>
<comment type="function">
    <text evidence="1">Component of the RIX1 complex required for processing of ITS2 sequences from 35S pre-rRNA.</text>
</comment>
<comment type="subunit">
    <text evidence="1">Component of the RIX1 complex, composed of IPI1, RIX1/IPI2 and IPI3 in a 1:2:2 stoichiometry. The complex interacts (via RIX1) with MDN1 (via its hexameric AAA ATPase ring) and the pre-60S ribosome particles.</text>
</comment>
<comment type="subcellular location">
    <subcellularLocation>
        <location evidence="1">Nucleus</location>
    </subcellularLocation>
</comment>
<comment type="similarity">
    <text evidence="3">Belongs to the IPI1/TEX10 family.</text>
</comment>
<sequence length="336" mass="37541">MAKKKTEKQKDFVKPKLRVGKTKAKPDNHTDTSFVAKSISLPNQSIAQKSDKNDEKDFLHQLSLTKHHSSTTRKEVLKSISSQLPSNPSLYKQILSSIMPLVHDSSQQVREEVASLLQKCAETQSGLLDLHITSVILFVHSAMSHIQPDIRSSSTKFLDIVLQHASEAVARSYFVKTLRSFFTIMSWNLRDDKKSLSLAVTTSSSIGGTSKKARVGHLAVLLRFLESTLFQKTAETTSVPINYIHPQTSHYMLPTNPHPYASLKLFTQETPQADDMFSLASLESLATDDLDTRRKIVHDVFQEPLRKNLTNLVKEGGEVGREAKSCLGVLDRLESS</sequence>